<comment type="similarity">
    <text evidence="1">Belongs to the bacterial ribosomal protein bL33 family.</text>
</comment>
<proteinExistence type="inferred from homology"/>
<dbReference type="EMBL" id="CP000736">
    <property type="protein sequence ID" value="ABR52491.1"/>
    <property type="molecule type" value="Genomic_DNA"/>
</dbReference>
<dbReference type="SMR" id="A6U223"/>
<dbReference type="KEGG" id="sah:SaurJH1_1643"/>
<dbReference type="HOGENOM" id="CLU_190949_0_2_9"/>
<dbReference type="GO" id="GO:0005737">
    <property type="term" value="C:cytoplasm"/>
    <property type="evidence" value="ECO:0007669"/>
    <property type="project" value="UniProtKB-ARBA"/>
</dbReference>
<dbReference type="GO" id="GO:1990904">
    <property type="term" value="C:ribonucleoprotein complex"/>
    <property type="evidence" value="ECO:0007669"/>
    <property type="project" value="UniProtKB-KW"/>
</dbReference>
<dbReference type="GO" id="GO:0005840">
    <property type="term" value="C:ribosome"/>
    <property type="evidence" value="ECO:0007669"/>
    <property type="project" value="UniProtKB-KW"/>
</dbReference>
<dbReference type="GO" id="GO:0003735">
    <property type="term" value="F:structural constituent of ribosome"/>
    <property type="evidence" value="ECO:0007669"/>
    <property type="project" value="InterPro"/>
</dbReference>
<dbReference type="GO" id="GO:0006412">
    <property type="term" value="P:translation"/>
    <property type="evidence" value="ECO:0007669"/>
    <property type="project" value="UniProtKB-UniRule"/>
</dbReference>
<dbReference type="Gene3D" id="2.20.28.120">
    <property type="entry name" value="Ribosomal protein L33"/>
    <property type="match status" value="1"/>
</dbReference>
<dbReference type="HAMAP" id="MF_00294">
    <property type="entry name" value="Ribosomal_bL33"/>
    <property type="match status" value="1"/>
</dbReference>
<dbReference type="InterPro" id="IPR001705">
    <property type="entry name" value="Ribosomal_bL33"/>
</dbReference>
<dbReference type="InterPro" id="IPR018264">
    <property type="entry name" value="Ribosomal_bL33_CS"/>
</dbReference>
<dbReference type="InterPro" id="IPR038584">
    <property type="entry name" value="Ribosomal_bL33_sf"/>
</dbReference>
<dbReference type="InterPro" id="IPR011332">
    <property type="entry name" value="Ribosomal_zn-bd"/>
</dbReference>
<dbReference type="NCBIfam" id="NF001764">
    <property type="entry name" value="PRK00504.1"/>
    <property type="match status" value="1"/>
</dbReference>
<dbReference type="NCBIfam" id="NF001860">
    <property type="entry name" value="PRK00595.1"/>
    <property type="match status" value="1"/>
</dbReference>
<dbReference type="NCBIfam" id="TIGR01023">
    <property type="entry name" value="rpmG_bact"/>
    <property type="match status" value="1"/>
</dbReference>
<dbReference type="PANTHER" id="PTHR43168">
    <property type="entry name" value="50S RIBOSOMAL PROTEIN L33, CHLOROPLASTIC"/>
    <property type="match status" value="1"/>
</dbReference>
<dbReference type="PANTHER" id="PTHR43168:SF2">
    <property type="entry name" value="LARGE RIBOSOMAL SUBUNIT PROTEIN BL33C"/>
    <property type="match status" value="1"/>
</dbReference>
<dbReference type="Pfam" id="PF00471">
    <property type="entry name" value="Ribosomal_L33"/>
    <property type="match status" value="1"/>
</dbReference>
<dbReference type="SUPFAM" id="SSF57829">
    <property type="entry name" value="Zn-binding ribosomal proteins"/>
    <property type="match status" value="1"/>
</dbReference>
<dbReference type="PROSITE" id="PS00582">
    <property type="entry name" value="RIBOSOMAL_L33"/>
    <property type="match status" value="1"/>
</dbReference>
<reference key="1">
    <citation type="submission" date="2007-06" db="EMBL/GenBank/DDBJ databases">
        <title>Complete sequence of chromosome of Staphylococcus aureus subsp. aureus JH1.</title>
        <authorList>
            <consortium name="US DOE Joint Genome Institute"/>
            <person name="Copeland A."/>
            <person name="Lucas S."/>
            <person name="Lapidus A."/>
            <person name="Barry K."/>
            <person name="Detter J.C."/>
            <person name="Glavina del Rio T."/>
            <person name="Hammon N."/>
            <person name="Israni S."/>
            <person name="Dalin E."/>
            <person name="Tice H."/>
            <person name="Pitluck S."/>
            <person name="Chain P."/>
            <person name="Malfatti S."/>
            <person name="Shin M."/>
            <person name="Vergez L."/>
            <person name="Schmutz J."/>
            <person name="Larimer F."/>
            <person name="Land M."/>
            <person name="Hauser L."/>
            <person name="Kyrpides N."/>
            <person name="Ivanova N."/>
            <person name="Tomasz A."/>
            <person name="Richardson P."/>
        </authorList>
    </citation>
    <scope>NUCLEOTIDE SEQUENCE [LARGE SCALE GENOMIC DNA]</scope>
    <source>
        <strain>JH1</strain>
    </source>
</reference>
<evidence type="ECO:0000255" key="1">
    <source>
        <dbReference type="HAMAP-Rule" id="MF_00294"/>
    </source>
</evidence>
<protein>
    <recommendedName>
        <fullName evidence="1">Large ribosomal subunit protein bL33C</fullName>
    </recommendedName>
    <alternativeName>
        <fullName evidence="1">50S ribosomal protein L33 3</fullName>
    </alternativeName>
</protein>
<organism>
    <name type="scientific">Staphylococcus aureus (strain JH1)</name>
    <dbReference type="NCBI Taxonomy" id="359787"/>
    <lineage>
        <taxon>Bacteria</taxon>
        <taxon>Bacillati</taxon>
        <taxon>Bacillota</taxon>
        <taxon>Bacilli</taxon>
        <taxon>Bacillales</taxon>
        <taxon>Staphylococcaceae</taxon>
        <taxon>Staphylococcus</taxon>
    </lineage>
</organism>
<keyword id="KW-0687">Ribonucleoprotein</keyword>
<keyword id="KW-0689">Ribosomal protein</keyword>
<feature type="chain" id="PRO_0000356683" description="Large ribosomal subunit protein bL33C">
    <location>
        <begin position="1"/>
        <end position="49"/>
    </location>
</feature>
<accession>A6U223</accession>
<sequence length="49" mass="5873">MRVNVTLACTECGDRNYITTKNKRNNPERVEMKKFCSRENKQTLHRETK</sequence>
<name>RL333_STAA2</name>
<gene>
    <name evidence="1" type="primary">rpmG3</name>
    <name type="ordered locus">SaurJH1_1643</name>
</gene>